<name>MGSA_YERP3</name>
<comment type="function">
    <text evidence="1">Catalyzes the formation of methylglyoxal from dihydroxyacetone phosphate.</text>
</comment>
<comment type="catalytic activity">
    <reaction evidence="1">
        <text>dihydroxyacetone phosphate = methylglyoxal + phosphate</text>
        <dbReference type="Rhea" id="RHEA:17937"/>
        <dbReference type="ChEBI" id="CHEBI:17158"/>
        <dbReference type="ChEBI" id="CHEBI:43474"/>
        <dbReference type="ChEBI" id="CHEBI:57642"/>
        <dbReference type="EC" id="4.2.3.3"/>
    </reaction>
</comment>
<comment type="similarity">
    <text evidence="1">Belongs to the methylglyoxal synthase family.</text>
</comment>
<keyword id="KW-0456">Lyase</keyword>
<sequence>MELTTRTIAARKHIALVSHDHCKKSLLAWVMENRDLLAQHELYATGTTGNLVQKATGIDVHCLLSGPMGGDQEVGALISEKKIDILIFFWDPLNAVPHDPDVKALLRLATVWNIPVATNRSTADFLIGSTLFSSEVTIAIPDYDRYMQQRLDLK</sequence>
<protein>
    <recommendedName>
        <fullName evidence="1">Methylglyoxal synthase</fullName>
        <shortName evidence="1">MGS</shortName>
        <ecNumber evidence="1">4.2.3.3</ecNumber>
    </recommendedName>
</protein>
<proteinExistence type="inferred from homology"/>
<organism>
    <name type="scientific">Yersinia pseudotuberculosis serotype O:1b (strain IP 31758)</name>
    <dbReference type="NCBI Taxonomy" id="349747"/>
    <lineage>
        <taxon>Bacteria</taxon>
        <taxon>Pseudomonadati</taxon>
        <taxon>Pseudomonadota</taxon>
        <taxon>Gammaproteobacteria</taxon>
        <taxon>Enterobacterales</taxon>
        <taxon>Yersiniaceae</taxon>
        <taxon>Yersinia</taxon>
    </lineage>
</organism>
<gene>
    <name evidence="1" type="primary">mgsA</name>
    <name type="ordered locus">YpsIP31758_2535</name>
</gene>
<feature type="chain" id="PRO_1000061091" description="Methylglyoxal synthase">
    <location>
        <begin position="1"/>
        <end position="154"/>
    </location>
</feature>
<feature type="domain" description="MGS-like" evidence="1">
    <location>
        <begin position="1"/>
        <end position="154"/>
    </location>
</feature>
<feature type="active site" description="Proton donor/acceptor" evidence="1">
    <location>
        <position position="71"/>
    </location>
</feature>
<feature type="binding site" evidence="1">
    <location>
        <position position="19"/>
    </location>
    <ligand>
        <name>substrate</name>
    </ligand>
</feature>
<feature type="binding site" evidence="1">
    <location>
        <position position="23"/>
    </location>
    <ligand>
        <name>substrate</name>
    </ligand>
</feature>
<feature type="binding site" evidence="1">
    <location>
        <begin position="45"/>
        <end position="48"/>
    </location>
    <ligand>
        <name>substrate</name>
    </ligand>
</feature>
<feature type="binding site" evidence="1">
    <location>
        <begin position="65"/>
        <end position="66"/>
    </location>
    <ligand>
        <name>substrate</name>
    </ligand>
</feature>
<feature type="binding site" evidence="1">
    <location>
        <position position="98"/>
    </location>
    <ligand>
        <name>substrate</name>
    </ligand>
</feature>
<dbReference type="EC" id="4.2.3.3" evidence="1"/>
<dbReference type="EMBL" id="CP000720">
    <property type="protein sequence ID" value="ABS48203.1"/>
    <property type="molecule type" value="Genomic_DNA"/>
</dbReference>
<dbReference type="RefSeq" id="WP_002213060.1">
    <property type="nucleotide sequence ID" value="NC_009708.1"/>
</dbReference>
<dbReference type="SMR" id="A7FJS2"/>
<dbReference type="KEGG" id="ypi:YpsIP31758_2535"/>
<dbReference type="HOGENOM" id="CLU_120420_0_1_6"/>
<dbReference type="Proteomes" id="UP000002412">
    <property type="component" value="Chromosome"/>
</dbReference>
<dbReference type="GO" id="GO:0005829">
    <property type="term" value="C:cytosol"/>
    <property type="evidence" value="ECO:0007669"/>
    <property type="project" value="TreeGrafter"/>
</dbReference>
<dbReference type="GO" id="GO:0008929">
    <property type="term" value="F:methylglyoxal synthase activity"/>
    <property type="evidence" value="ECO:0007669"/>
    <property type="project" value="UniProtKB-UniRule"/>
</dbReference>
<dbReference type="GO" id="GO:0019242">
    <property type="term" value="P:methylglyoxal biosynthetic process"/>
    <property type="evidence" value="ECO:0007669"/>
    <property type="project" value="UniProtKB-UniRule"/>
</dbReference>
<dbReference type="CDD" id="cd01422">
    <property type="entry name" value="MGS"/>
    <property type="match status" value="1"/>
</dbReference>
<dbReference type="FunFam" id="3.40.50.1380:FF:000002">
    <property type="entry name" value="Methylglyoxal synthase"/>
    <property type="match status" value="1"/>
</dbReference>
<dbReference type="Gene3D" id="3.40.50.1380">
    <property type="entry name" value="Methylglyoxal synthase-like domain"/>
    <property type="match status" value="1"/>
</dbReference>
<dbReference type="HAMAP" id="MF_00549">
    <property type="entry name" value="Methylglyoxal_synth"/>
    <property type="match status" value="1"/>
</dbReference>
<dbReference type="InterPro" id="IPR004363">
    <property type="entry name" value="Methylgl_synth"/>
</dbReference>
<dbReference type="InterPro" id="IPR018148">
    <property type="entry name" value="Methylglyoxal_synth_AS"/>
</dbReference>
<dbReference type="InterPro" id="IPR011607">
    <property type="entry name" value="MGS-like_dom"/>
</dbReference>
<dbReference type="InterPro" id="IPR036914">
    <property type="entry name" value="MGS-like_dom_sf"/>
</dbReference>
<dbReference type="NCBIfam" id="TIGR00160">
    <property type="entry name" value="MGSA"/>
    <property type="match status" value="1"/>
</dbReference>
<dbReference type="NCBIfam" id="NF003559">
    <property type="entry name" value="PRK05234.1"/>
    <property type="match status" value="1"/>
</dbReference>
<dbReference type="PANTHER" id="PTHR30492">
    <property type="entry name" value="METHYLGLYOXAL SYNTHASE"/>
    <property type="match status" value="1"/>
</dbReference>
<dbReference type="PANTHER" id="PTHR30492:SF0">
    <property type="entry name" value="METHYLGLYOXAL SYNTHASE"/>
    <property type="match status" value="1"/>
</dbReference>
<dbReference type="Pfam" id="PF02142">
    <property type="entry name" value="MGS"/>
    <property type="match status" value="1"/>
</dbReference>
<dbReference type="PIRSF" id="PIRSF006614">
    <property type="entry name" value="Methylglyox_syn"/>
    <property type="match status" value="1"/>
</dbReference>
<dbReference type="SMART" id="SM00851">
    <property type="entry name" value="MGS"/>
    <property type="match status" value="1"/>
</dbReference>
<dbReference type="SUPFAM" id="SSF52335">
    <property type="entry name" value="Methylglyoxal synthase-like"/>
    <property type="match status" value="1"/>
</dbReference>
<dbReference type="PROSITE" id="PS01335">
    <property type="entry name" value="METHYLGLYOXAL_SYNTH"/>
    <property type="match status" value="1"/>
</dbReference>
<dbReference type="PROSITE" id="PS51855">
    <property type="entry name" value="MGS"/>
    <property type="match status" value="1"/>
</dbReference>
<accession>A7FJS2</accession>
<evidence type="ECO:0000255" key="1">
    <source>
        <dbReference type="HAMAP-Rule" id="MF_00549"/>
    </source>
</evidence>
<reference key="1">
    <citation type="journal article" date="2007" name="PLoS Genet.">
        <title>The complete genome sequence of Yersinia pseudotuberculosis IP31758, the causative agent of Far East scarlet-like fever.</title>
        <authorList>
            <person name="Eppinger M."/>
            <person name="Rosovitz M.J."/>
            <person name="Fricke W.F."/>
            <person name="Rasko D.A."/>
            <person name="Kokorina G."/>
            <person name="Fayolle C."/>
            <person name="Lindler L.E."/>
            <person name="Carniel E."/>
            <person name="Ravel J."/>
        </authorList>
    </citation>
    <scope>NUCLEOTIDE SEQUENCE [LARGE SCALE GENOMIC DNA]</scope>
    <source>
        <strain>IP 31758</strain>
    </source>
</reference>